<reference key="1">
    <citation type="journal article" date="2005" name="Science">
        <title>Life at depth: Photobacterium profundum genome sequence and expression analysis.</title>
        <authorList>
            <person name="Vezzi A."/>
            <person name="Campanaro S."/>
            <person name="D'Angelo M."/>
            <person name="Simonato F."/>
            <person name="Vitulo N."/>
            <person name="Lauro F.M."/>
            <person name="Cestaro A."/>
            <person name="Malacrida G."/>
            <person name="Simionati B."/>
            <person name="Cannata N."/>
            <person name="Romualdi C."/>
            <person name="Bartlett D.H."/>
            <person name="Valle G."/>
        </authorList>
    </citation>
    <scope>NUCLEOTIDE SEQUENCE [LARGE SCALE GENOMIC DNA]</scope>
    <source>
        <strain>ATCC BAA-1253 / SS9</strain>
    </source>
</reference>
<feature type="chain" id="PRO_0000258608" description="HTH-type transcriptional regulator ArgP">
    <location>
        <begin position="1"/>
        <end position="298"/>
    </location>
</feature>
<feature type="domain" description="HTH lysR-type" evidence="1">
    <location>
        <begin position="4"/>
        <end position="60"/>
    </location>
</feature>
<feature type="DNA-binding region" description="H-T-H motif" evidence="1">
    <location>
        <begin position="21"/>
        <end position="40"/>
    </location>
</feature>
<keyword id="KW-0238">DNA-binding</keyword>
<keyword id="KW-1185">Reference proteome</keyword>
<keyword id="KW-0804">Transcription</keyword>
<keyword id="KW-0805">Transcription regulation</keyword>
<comment type="function">
    <text evidence="1">Controls the transcription of genes involved in arginine and lysine metabolism.</text>
</comment>
<comment type="subunit">
    <text evidence="1">Homodimer.</text>
</comment>
<comment type="similarity">
    <text evidence="2">Belongs to the LysR transcriptional regulatory family.</text>
</comment>
<comment type="sequence caution" evidence="2">
    <conflict type="erroneous initiation">
        <sequence resource="EMBL-CDS" id="CAG21441"/>
    </conflict>
</comment>
<protein>
    <recommendedName>
        <fullName evidence="1">HTH-type transcriptional regulator ArgP</fullName>
    </recommendedName>
</protein>
<gene>
    <name evidence="1" type="primary">argP</name>
    <name type="synonym">iciA</name>
    <name type="ordered locus">PBPRA3126</name>
</gene>
<evidence type="ECO:0000255" key="1">
    <source>
        <dbReference type="HAMAP-Rule" id="MF_00513"/>
    </source>
</evidence>
<evidence type="ECO:0000305" key="2"/>
<accession>Q6LMN6</accession>
<proteinExistence type="inferred from homology"/>
<organism>
    <name type="scientific">Photobacterium profundum (strain SS9)</name>
    <dbReference type="NCBI Taxonomy" id="298386"/>
    <lineage>
        <taxon>Bacteria</taxon>
        <taxon>Pseudomonadati</taxon>
        <taxon>Pseudomonadota</taxon>
        <taxon>Gammaproteobacteria</taxon>
        <taxon>Vibrionales</taxon>
        <taxon>Vibrionaceae</taxon>
        <taxon>Photobacterium</taxon>
    </lineage>
</organism>
<dbReference type="EMBL" id="CR378673">
    <property type="protein sequence ID" value="CAG21441.1"/>
    <property type="status" value="ALT_INIT"/>
    <property type="molecule type" value="Genomic_DNA"/>
</dbReference>
<dbReference type="RefSeq" id="WP_041394522.1">
    <property type="nucleotide sequence ID" value="NC_006370.1"/>
</dbReference>
<dbReference type="SMR" id="Q6LMN6"/>
<dbReference type="STRING" id="298386.PBPRA3126"/>
<dbReference type="KEGG" id="ppr:PBPRA3126"/>
<dbReference type="eggNOG" id="COG0583">
    <property type="taxonomic scope" value="Bacteria"/>
</dbReference>
<dbReference type="HOGENOM" id="CLU_063829_0_0_6"/>
<dbReference type="Proteomes" id="UP000000593">
    <property type="component" value="Chromosome 1"/>
</dbReference>
<dbReference type="GO" id="GO:0003677">
    <property type="term" value="F:DNA binding"/>
    <property type="evidence" value="ECO:0007669"/>
    <property type="project" value="UniProtKB-UniRule"/>
</dbReference>
<dbReference type="GO" id="GO:0003700">
    <property type="term" value="F:DNA-binding transcription factor activity"/>
    <property type="evidence" value="ECO:0007669"/>
    <property type="project" value="UniProtKB-UniRule"/>
</dbReference>
<dbReference type="CDD" id="cd08428">
    <property type="entry name" value="PBP2_IciA_ArgP"/>
    <property type="match status" value="1"/>
</dbReference>
<dbReference type="FunFam" id="1.10.10.10:FF:000061">
    <property type="entry name" value="HTH-type transcriptional regulator ArgP"/>
    <property type="match status" value="1"/>
</dbReference>
<dbReference type="Gene3D" id="3.40.190.290">
    <property type="match status" value="1"/>
</dbReference>
<dbReference type="Gene3D" id="1.10.10.10">
    <property type="entry name" value="Winged helix-like DNA-binding domain superfamily/Winged helix DNA-binding domain"/>
    <property type="match status" value="1"/>
</dbReference>
<dbReference type="HAMAP" id="MF_00513">
    <property type="entry name" value="HTH_type_ArgP"/>
    <property type="match status" value="1"/>
</dbReference>
<dbReference type="InterPro" id="IPR017685">
    <property type="entry name" value="ArgP"/>
</dbReference>
<dbReference type="InterPro" id="IPR023490">
    <property type="entry name" value="ArgP_gammaproteobact"/>
</dbReference>
<dbReference type="InterPro" id="IPR050176">
    <property type="entry name" value="LTTR"/>
</dbReference>
<dbReference type="InterPro" id="IPR005119">
    <property type="entry name" value="LysR_subst-bd"/>
</dbReference>
<dbReference type="InterPro" id="IPR000847">
    <property type="entry name" value="Tscrpt_reg_HTH_LysR"/>
</dbReference>
<dbReference type="InterPro" id="IPR036388">
    <property type="entry name" value="WH-like_DNA-bd_sf"/>
</dbReference>
<dbReference type="InterPro" id="IPR036390">
    <property type="entry name" value="WH_DNA-bd_sf"/>
</dbReference>
<dbReference type="NCBIfam" id="TIGR03298">
    <property type="entry name" value="argP"/>
    <property type="match status" value="1"/>
</dbReference>
<dbReference type="NCBIfam" id="NF002964">
    <property type="entry name" value="PRK03635.1"/>
    <property type="match status" value="1"/>
</dbReference>
<dbReference type="NCBIfam" id="NF009888">
    <property type="entry name" value="PRK13348.1"/>
    <property type="match status" value="1"/>
</dbReference>
<dbReference type="PANTHER" id="PTHR30579:SF2">
    <property type="entry name" value="HTH-TYPE TRANSCRIPTIONAL REGULATOR ARGP"/>
    <property type="match status" value="1"/>
</dbReference>
<dbReference type="PANTHER" id="PTHR30579">
    <property type="entry name" value="TRANSCRIPTIONAL REGULATOR"/>
    <property type="match status" value="1"/>
</dbReference>
<dbReference type="Pfam" id="PF00126">
    <property type="entry name" value="HTH_1"/>
    <property type="match status" value="1"/>
</dbReference>
<dbReference type="Pfam" id="PF03466">
    <property type="entry name" value="LysR_substrate"/>
    <property type="match status" value="1"/>
</dbReference>
<dbReference type="PRINTS" id="PR00039">
    <property type="entry name" value="HTHLYSR"/>
</dbReference>
<dbReference type="SUPFAM" id="SSF53850">
    <property type="entry name" value="Periplasmic binding protein-like II"/>
    <property type="match status" value="1"/>
</dbReference>
<dbReference type="SUPFAM" id="SSF46785">
    <property type="entry name" value="Winged helix' DNA-binding domain"/>
    <property type="match status" value="1"/>
</dbReference>
<dbReference type="PROSITE" id="PS50931">
    <property type="entry name" value="HTH_LYSR"/>
    <property type="match status" value="1"/>
</dbReference>
<sequence length="298" mass="33372">MRGVDYRWVAALDAVIAQRGFERAAEKLCITQSAVSQRIKQLEKLMAQPLLVREQPPRPTAAGQKLLGLYRRVRLLEQEVLPEITPDDISQPLSVALATNADSLATWLLPALSPLLKSRFIELNLLVEDEARTLDKLRSGEVVGAISMEAGVIPGCVADYLGRMNYLCVASPDFQQKYFSNGVTQANLVSAPGVVFDHHDDMHEVFVQQYFNLPIGSVMKHTVRSSEAFVRIATEGIAYCLIPEVQIQRELDRGDLVNVTPELSLVRNLYWHHWALESGVLTELSERLIQYARQALPQ</sequence>
<name>ARGP_PHOPR</name>